<protein>
    <recommendedName>
        <fullName evidence="1">NAD(P)H-hydrate epimerase</fullName>
        <ecNumber evidence="1">5.1.99.6</ecNumber>
    </recommendedName>
    <alternativeName>
        <fullName evidence="1">NAD(P)HX epimerase</fullName>
    </alternativeName>
</protein>
<comment type="function">
    <text evidence="1">Catalyzes the epimerization of the S- and R-forms of NAD(P)HX, a damaged form of NAD(P)H that is a result of enzymatic or heat-dependent hydration. This is a prerequisite for the S-specific NAD(P)H-hydrate dehydratase to allow the repair of both epimers of NAD(P)HX.</text>
</comment>
<comment type="catalytic activity">
    <reaction evidence="1">
        <text>(6R)-NADHX = (6S)-NADHX</text>
        <dbReference type="Rhea" id="RHEA:32215"/>
        <dbReference type="ChEBI" id="CHEBI:64074"/>
        <dbReference type="ChEBI" id="CHEBI:64075"/>
        <dbReference type="EC" id="5.1.99.6"/>
    </reaction>
</comment>
<comment type="catalytic activity">
    <reaction evidence="1">
        <text>(6R)-NADPHX = (6S)-NADPHX</text>
        <dbReference type="Rhea" id="RHEA:32227"/>
        <dbReference type="ChEBI" id="CHEBI:64076"/>
        <dbReference type="ChEBI" id="CHEBI:64077"/>
        <dbReference type="EC" id="5.1.99.6"/>
    </reaction>
</comment>
<comment type="cofactor">
    <cofactor evidence="1">
        <name>K(+)</name>
        <dbReference type="ChEBI" id="CHEBI:29103"/>
    </cofactor>
    <text evidence="1">Binds 1 potassium ion per subunit.</text>
</comment>
<comment type="similarity">
    <text evidence="1">Belongs to the NnrE/AIBP family.</text>
</comment>
<organism>
    <name type="scientific">Leuconostoc citreum (strain KM20)</name>
    <dbReference type="NCBI Taxonomy" id="349519"/>
    <lineage>
        <taxon>Bacteria</taxon>
        <taxon>Bacillati</taxon>
        <taxon>Bacillota</taxon>
        <taxon>Bacilli</taxon>
        <taxon>Lactobacillales</taxon>
        <taxon>Lactobacillaceae</taxon>
        <taxon>Leuconostoc</taxon>
    </lineage>
</organism>
<evidence type="ECO:0000255" key="1">
    <source>
        <dbReference type="HAMAP-Rule" id="MF_01966"/>
    </source>
</evidence>
<reference key="1">
    <citation type="journal article" date="2008" name="J. Bacteriol.">
        <title>Complete genome sequence of Leuconostoc citreum KM20.</title>
        <authorList>
            <person name="Kim J.F."/>
            <person name="Jeong H."/>
            <person name="Lee J.-S."/>
            <person name="Choi S.-H."/>
            <person name="Ha M."/>
            <person name="Hur C.-G."/>
            <person name="Kim J.-S."/>
            <person name="Lee S."/>
            <person name="Park H.-S."/>
            <person name="Park Y.-H."/>
            <person name="Oh T.K."/>
        </authorList>
    </citation>
    <scope>NUCLEOTIDE SEQUENCE [LARGE SCALE GENOMIC DNA]</scope>
    <source>
        <strain>KM20</strain>
    </source>
</reference>
<sequence>MQLVTAAEMQQIDSYTIETIGMPQNVLIERAAMSVIDVIGAGHFNLDHILVLAGLGNNGADGIAIARLLYTQGFNVSLQFVGNVSRAKASVQQQLQIIENYGLIRAEKSDFNEATLIVDAIFGVGLNNTLPEGLQKMIKAANHIEKTVIAVDIPTGIDATTGEVRGAALKAHTTVTFGYNKVGLTQNVGGYLSGNVIVKDIGLRLPEDFTFTTVTPDNIATT</sequence>
<dbReference type="EC" id="5.1.99.6" evidence="1"/>
<dbReference type="EMBL" id="DQ489736">
    <property type="protein sequence ID" value="ACA83460.1"/>
    <property type="molecule type" value="Genomic_DNA"/>
</dbReference>
<dbReference type="RefSeq" id="WP_004902079.1">
    <property type="nucleotide sequence ID" value="NC_010471.1"/>
</dbReference>
<dbReference type="SMR" id="B1MW95"/>
<dbReference type="STRING" id="349519.LCK_01637"/>
<dbReference type="KEGG" id="lci:LCK_01637"/>
<dbReference type="eggNOG" id="COG0062">
    <property type="taxonomic scope" value="Bacteria"/>
</dbReference>
<dbReference type="HOGENOM" id="CLU_024853_0_1_9"/>
<dbReference type="OrthoDB" id="9806925at2"/>
<dbReference type="Proteomes" id="UP000002166">
    <property type="component" value="Chromosome"/>
</dbReference>
<dbReference type="GO" id="GO:0000932">
    <property type="term" value="C:P-body"/>
    <property type="evidence" value="ECO:0007669"/>
    <property type="project" value="TreeGrafter"/>
</dbReference>
<dbReference type="GO" id="GO:0046872">
    <property type="term" value="F:metal ion binding"/>
    <property type="evidence" value="ECO:0007669"/>
    <property type="project" value="UniProtKB-KW"/>
</dbReference>
<dbReference type="GO" id="GO:0003729">
    <property type="term" value="F:mRNA binding"/>
    <property type="evidence" value="ECO:0007669"/>
    <property type="project" value="TreeGrafter"/>
</dbReference>
<dbReference type="GO" id="GO:0052856">
    <property type="term" value="F:NAD(P)HX epimerase activity"/>
    <property type="evidence" value="ECO:0007669"/>
    <property type="project" value="UniProtKB-UniRule"/>
</dbReference>
<dbReference type="GO" id="GO:0000166">
    <property type="term" value="F:nucleotide binding"/>
    <property type="evidence" value="ECO:0007669"/>
    <property type="project" value="UniProtKB-KW"/>
</dbReference>
<dbReference type="GO" id="GO:0031087">
    <property type="term" value="P:deadenylation-independent decapping of nuclear-transcribed mRNA"/>
    <property type="evidence" value="ECO:0007669"/>
    <property type="project" value="TreeGrafter"/>
</dbReference>
<dbReference type="GO" id="GO:0033962">
    <property type="term" value="P:P-body assembly"/>
    <property type="evidence" value="ECO:0007669"/>
    <property type="project" value="TreeGrafter"/>
</dbReference>
<dbReference type="Gene3D" id="3.40.50.10260">
    <property type="entry name" value="YjeF N-terminal domain"/>
    <property type="match status" value="1"/>
</dbReference>
<dbReference type="HAMAP" id="MF_01966">
    <property type="entry name" value="NADHX_epimerase"/>
    <property type="match status" value="1"/>
</dbReference>
<dbReference type="InterPro" id="IPR004443">
    <property type="entry name" value="YjeF_N_dom"/>
</dbReference>
<dbReference type="InterPro" id="IPR036652">
    <property type="entry name" value="YjeF_N_dom_sf"/>
</dbReference>
<dbReference type="NCBIfam" id="TIGR00197">
    <property type="entry name" value="yjeF_nterm"/>
    <property type="match status" value="1"/>
</dbReference>
<dbReference type="PANTHER" id="PTHR13612">
    <property type="entry name" value="ENHANCER OF MRNA-DECAPPING PROTEIN 3"/>
    <property type="match status" value="1"/>
</dbReference>
<dbReference type="PANTHER" id="PTHR13612:SF0">
    <property type="entry name" value="ENHANCER OF MRNA-DECAPPING PROTEIN 3"/>
    <property type="match status" value="1"/>
</dbReference>
<dbReference type="Pfam" id="PF03853">
    <property type="entry name" value="YjeF_N"/>
    <property type="match status" value="1"/>
</dbReference>
<dbReference type="SUPFAM" id="SSF64153">
    <property type="entry name" value="YjeF N-terminal domain-like"/>
    <property type="match status" value="1"/>
</dbReference>
<dbReference type="PROSITE" id="PS51385">
    <property type="entry name" value="YJEF_N"/>
    <property type="match status" value="1"/>
</dbReference>
<keyword id="KW-0413">Isomerase</keyword>
<keyword id="KW-0479">Metal-binding</keyword>
<keyword id="KW-0520">NAD</keyword>
<keyword id="KW-0521">NADP</keyword>
<keyword id="KW-0547">Nucleotide-binding</keyword>
<keyword id="KW-0630">Potassium</keyword>
<keyword id="KW-1185">Reference proteome</keyword>
<name>NNRE_LEUCK</name>
<feature type="chain" id="PRO_0000416365" description="NAD(P)H-hydrate epimerase">
    <location>
        <begin position="1"/>
        <end position="222"/>
    </location>
</feature>
<feature type="domain" description="YjeF N-terminal" evidence="1">
    <location>
        <begin position="9"/>
        <end position="209"/>
    </location>
</feature>
<feature type="binding site" evidence="1">
    <location>
        <begin position="57"/>
        <end position="61"/>
    </location>
    <ligand>
        <name>(6S)-NADPHX</name>
        <dbReference type="ChEBI" id="CHEBI:64076"/>
    </ligand>
</feature>
<feature type="binding site" evidence="1">
    <location>
        <position position="58"/>
    </location>
    <ligand>
        <name>K(+)</name>
        <dbReference type="ChEBI" id="CHEBI:29103"/>
    </ligand>
</feature>
<feature type="binding site" evidence="1">
    <location>
        <position position="119"/>
    </location>
    <ligand>
        <name>K(+)</name>
        <dbReference type="ChEBI" id="CHEBI:29103"/>
    </ligand>
</feature>
<feature type="binding site" evidence="1">
    <location>
        <begin position="123"/>
        <end position="129"/>
    </location>
    <ligand>
        <name>(6S)-NADPHX</name>
        <dbReference type="ChEBI" id="CHEBI:64076"/>
    </ligand>
</feature>
<feature type="binding site" evidence="1">
    <location>
        <position position="152"/>
    </location>
    <ligand>
        <name>(6S)-NADPHX</name>
        <dbReference type="ChEBI" id="CHEBI:64076"/>
    </ligand>
</feature>
<feature type="binding site" evidence="1">
    <location>
        <position position="155"/>
    </location>
    <ligand>
        <name>K(+)</name>
        <dbReference type="ChEBI" id="CHEBI:29103"/>
    </ligand>
</feature>
<proteinExistence type="inferred from homology"/>
<gene>
    <name evidence="1" type="primary">nnrE</name>
    <name type="ordered locus">LCK_01637</name>
</gene>
<accession>B1MW95</accession>